<accession>O95202</accession>
<accession>B4DED2</accession>
<accession>Q9UF65</accession>
<evidence type="ECO:0000250" key="1">
    <source>
        <dbReference type="UniProtKB" id="Q9Z2I0"/>
    </source>
</evidence>
<evidence type="ECO:0000255" key="2"/>
<evidence type="ECO:0000255" key="3">
    <source>
        <dbReference type="PROSITE-ProRule" id="PRU00448"/>
    </source>
</evidence>
<evidence type="ECO:0000255" key="4">
    <source>
        <dbReference type="PROSITE-ProRule" id="PRU01094"/>
    </source>
</evidence>
<evidence type="ECO:0000256" key="5">
    <source>
        <dbReference type="SAM" id="MobiDB-lite"/>
    </source>
</evidence>
<evidence type="ECO:0000269" key="6">
    <source>
    </source>
</evidence>
<evidence type="ECO:0000269" key="7">
    <source>
    </source>
</evidence>
<evidence type="ECO:0000269" key="8">
    <source>
    </source>
</evidence>
<evidence type="ECO:0000269" key="9">
    <source>
    </source>
</evidence>
<evidence type="ECO:0000269" key="10">
    <source>
    </source>
</evidence>
<evidence type="ECO:0000269" key="11">
    <source>
    </source>
</evidence>
<evidence type="ECO:0000269" key="12">
    <source>
    </source>
</evidence>
<evidence type="ECO:0000269" key="13">
    <source>
    </source>
</evidence>
<evidence type="ECO:0000269" key="14">
    <source>
    </source>
</evidence>
<evidence type="ECO:0000269" key="15">
    <source>
    </source>
</evidence>
<evidence type="ECO:0000303" key="16">
    <source>
    </source>
</evidence>
<evidence type="ECO:0000303" key="17">
    <source>
    </source>
</evidence>
<evidence type="ECO:0000303" key="18">
    <source>
    </source>
</evidence>
<evidence type="ECO:0000305" key="19"/>
<evidence type="ECO:0000305" key="20">
    <source>
    </source>
</evidence>
<evidence type="ECO:0000312" key="21">
    <source>
        <dbReference type="HGNC" id="HGNC:6556"/>
    </source>
</evidence>
<evidence type="ECO:0007744" key="22">
    <source>
    </source>
</evidence>
<evidence type="ECO:0007829" key="23">
    <source>
        <dbReference type="PDB" id="9BA1"/>
    </source>
</evidence>
<gene>
    <name evidence="21" type="primary">LETM1</name>
</gene>
<organism>
    <name type="scientific">Homo sapiens</name>
    <name type="common">Human</name>
    <dbReference type="NCBI Taxonomy" id="9606"/>
    <lineage>
        <taxon>Eukaryota</taxon>
        <taxon>Metazoa</taxon>
        <taxon>Chordata</taxon>
        <taxon>Craniata</taxon>
        <taxon>Vertebrata</taxon>
        <taxon>Euteleostomi</taxon>
        <taxon>Mammalia</taxon>
        <taxon>Eutheria</taxon>
        <taxon>Euarchontoglires</taxon>
        <taxon>Primates</taxon>
        <taxon>Haplorrhini</taxon>
        <taxon>Catarrhini</taxon>
        <taxon>Hominidae</taxon>
        <taxon>Homo</taxon>
    </lineage>
</organism>
<dbReference type="EMBL" id="AF061025">
    <property type="protein sequence ID" value="AAD13138.1"/>
    <property type="molecule type" value="mRNA"/>
</dbReference>
<dbReference type="EMBL" id="AK293572">
    <property type="protein sequence ID" value="BAG57043.1"/>
    <property type="molecule type" value="mRNA"/>
</dbReference>
<dbReference type="EMBL" id="AK310563">
    <property type="status" value="NOT_ANNOTATED_CDS"/>
    <property type="molecule type" value="mRNA"/>
</dbReference>
<dbReference type="EMBL" id="AL133650">
    <property type="protein sequence ID" value="CAB63769.2"/>
    <property type="status" value="ALT_SEQ"/>
    <property type="molecule type" value="mRNA"/>
</dbReference>
<dbReference type="EMBL" id="BC014500">
    <property type="protein sequence ID" value="AAH14500.1"/>
    <property type="molecule type" value="mRNA"/>
</dbReference>
<dbReference type="EMBL" id="BC021208">
    <property type="protein sequence ID" value="AAH21208.1"/>
    <property type="molecule type" value="mRNA"/>
</dbReference>
<dbReference type="CCDS" id="CCDS3355.1">
    <molecule id="O95202-1"/>
</dbReference>
<dbReference type="PIR" id="T43494">
    <property type="entry name" value="T43494"/>
</dbReference>
<dbReference type="RefSeq" id="NP_036450.1">
    <molecule id="O95202-1"/>
    <property type="nucleotide sequence ID" value="NM_012318.3"/>
</dbReference>
<dbReference type="PDB" id="9BA1">
    <property type="method" value="NMR"/>
    <property type="chains" value="A=643-699"/>
</dbReference>
<dbReference type="PDBsum" id="9BA1"/>
<dbReference type="SMR" id="O95202"/>
<dbReference type="BioGRID" id="110145">
    <property type="interactions" value="265"/>
</dbReference>
<dbReference type="FunCoup" id="O95202">
    <property type="interactions" value="2999"/>
</dbReference>
<dbReference type="IntAct" id="O95202">
    <property type="interactions" value="107"/>
</dbReference>
<dbReference type="MINT" id="O95202"/>
<dbReference type="STRING" id="9606.ENSP00000305653"/>
<dbReference type="TCDB" id="2.A.97.1.1">
    <property type="family name" value="the mitochondrial inner membrane k(+)/h(+) and ca(2+)/h(+) exchanger (letm1) family"/>
</dbReference>
<dbReference type="GlyGen" id="O95202">
    <property type="glycosylation" value="1 site, 1 O-linked glycan (1 site)"/>
</dbReference>
<dbReference type="iPTMnet" id="O95202"/>
<dbReference type="MetOSite" id="O95202"/>
<dbReference type="PhosphoSitePlus" id="O95202"/>
<dbReference type="SwissPalm" id="O95202"/>
<dbReference type="BioMuta" id="LETM1"/>
<dbReference type="jPOST" id="O95202"/>
<dbReference type="MassIVE" id="O95202"/>
<dbReference type="PaxDb" id="9606-ENSP00000305653"/>
<dbReference type="PeptideAtlas" id="O95202"/>
<dbReference type="ProteomicsDB" id="50710">
    <molecule id="O95202-1"/>
</dbReference>
<dbReference type="ProteomicsDB" id="50711">
    <molecule id="O95202-2"/>
</dbReference>
<dbReference type="ProteomicsDB" id="50712">
    <molecule id="O95202-3"/>
</dbReference>
<dbReference type="Pumba" id="O95202"/>
<dbReference type="Antibodypedia" id="2597">
    <property type="antibodies" value="267 antibodies from 30 providers"/>
</dbReference>
<dbReference type="DNASU" id="3954"/>
<dbReference type="Ensembl" id="ENST00000302787.3">
    <molecule id="O95202-1"/>
    <property type="protein sequence ID" value="ENSP00000305653.2"/>
    <property type="gene ID" value="ENSG00000168924.15"/>
</dbReference>
<dbReference type="GeneID" id="3954"/>
<dbReference type="KEGG" id="hsa:3954"/>
<dbReference type="MANE-Select" id="ENST00000302787.3">
    <property type="protein sequence ID" value="ENSP00000305653.2"/>
    <property type="RefSeq nucleotide sequence ID" value="NM_012318.3"/>
    <property type="RefSeq protein sequence ID" value="NP_036450.1"/>
</dbReference>
<dbReference type="UCSC" id="uc003gdv.3">
    <molecule id="O95202-1"/>
    <property type="organism name" value="human"/>
</dbReference>
<dbReference type="AGR" id="HGNC:6556"/>
<dbReference type="CTD" id="3954"/>
<dbReference type="DisGeNET" id="3954"/>
<dbReference type="GeneCards" id="LETM1"/>
<dbReference type="HGNC" id="HGNC:6556">
    <property type="gene designation" value="LETM1"/>
</dbReference>
<dbReference type="HPA" id="ENSG00000168924">
    <property type="expression patterns" value="Low tissue specificity"/>
</dbReference>
<dbReference type="MalaCards" id="LETM1"/>
<dbReference type="MIM" id="604407">
    <property type="type" value="gene"/>
</dbReference>
<dbReference type="MIM" id="620089">
    <property type="type" value="phenotype"/>
</dbReference>
<dbReference type="neXtProt" id="NX_O95202"/>
<dbReference type="OpenTargets" id="ENSG00000168924"/>
<dbReference type="Orphanet" id="280">
    <property type="disease" value="Wolf-Hirschhorn syndrome"/>
</dbReference>
<dbReference type="PharmGKB" id="PA30335"/>
<dbReference type="VEuPathDB" id="HostDB:ENSG00000168924"/>
<dbReference type="eggNOG" id="KOG1043">
    <property type="taxonomic scope" value="Eukaryota"/>
</dbReference>
<dbReference type="GeneTree" id="ENSGT00950000183167"/>
<dbReference type="HOGENOM" id="CLU_008958_2_1_1"/>
<dbReference type="InParanoid" id="O95202"/>
<dbReference type="OMA" id="HGFRHLH"/>
<dbReference type="OrthoDB" id="624114at2759"/>
<dbReference type="PAN-GO" id="O95202">
    <property type="GO annotations" value="1 GO annotation based on evolutionary models"/>
</dbReference>
<dbReference type="PhylomeDB" id="O95202"/>
<dbReference type="TreeFam" id="TF316321"/>
<dbReference type="PathwayCommons" id="O95202"/>
<dbReference type="Reactome" id="R-HSA-8949215">
    <property type="pathway name" value="Mitochondrial calcium ion transport"/>
</dbReference>
<dbReference type="Reactome" id="R-HSA-9013408">
    <property type="pathway name" value="RHOG GTPase cycle"/>
</dbReference>
<dbReference type="Reactome" id="R-HSA-9865881">
    <property type="pathway name" value="Complex III assembly"/>
</dbReference>
<dbReference type="SignaLink" id="O95202"/>
<dbReference type="SIGNOR" id="O95202"/>
<dbReference type="BioGRID-ORCS" id="3954">
    <property type="hits" value="671 hits in 1163 CRISPR screens"/>
</dbReference>
<dbReference type="CD-CODE" id="FB4E32DD">
    <property type="entry name" value="Presynaptic clusters and postsynaptic densities"/>
</dbReference>
<dbReference type="ChiTaRS" id="LETM1">
    <property type="organism name" value="human"/>
</dbReference>
<dbReference type="GeneWiki" id="LETM1"/>
<dbReference type="GenomeRNAi" id="3954"/>
<dbReference type="Pharos" id="O95202">
    <property type="development level" value="Tbio"/>
</dbReference>
<dbReference type="PRO" id="PR:O95202"/>
<dbReference type="Proteomes" id="UP000005640">
    <property type="component" value="Chromosome 4"/>
</dbReference>
<dbReference type="RNAct" id="O95202">
    <property type="molecule type" value="protein"/>
</dbReference>
<dbReference type="Bgee" id="ENSG00000168924">
    <property type="expression patterns" value="Expressed in mucosa of transverse colon and 182 other cell types or tissues"/>
</dbReference>
<dbReference type="GO" id="GO:0005743">
    <property type="term" value="C:mitochondrial inner membrane"/>
    <property type="evidence" value="ECO:0000314"/>
    <property type="project" value="UniProtKB"/>
</dbReference>
<dbReference type="GO" id="GO:0005739">
    <property type="term" value="C:mitochondrion"/>
    <property type="evidence" value="ECO:0000314"/>
    <property type="project" value="HPA"/>
</dbReference>
<dbReference type="GO" id="GO:0005509">
    <property type="term" value="F:calcium ion binding"/>
    <property type="evidence" value="ECO:0000304"/>
    <property type="project" value="UniProtKB"/>
</dbReference>
<dbReference type="GO" id="GO:0015369">
    <property type="term" value="F:calcium:proton antiporter activity"/>
    <property type="evidence" value="ECO:0000314"/>
    <property type="project" value="UniProtKB"/>
</dbReference>
<dbReference type="GO" id="GO:0043022">
    <property type="term" value="F:ribosome binding"/>
    <property type="evidence" value="ECO:0007669"/>
    <property type="project" value="InterPro"/>
</dbReference>
<dbReference type="GO" id="GO:0099093">
    <property type="term" value="P:calcium export from the mitochondrion"/>
    <property type="evidence" value="ECO:0000314"/>
    <property type="project" value="UniProtKB"/>
</dbReference>
<dbReference type="GO" id="GO:0006816">
    <property type="term" value="P:calcium ion transport"/>
    <property type="evidence" value="ECO:0000315"/>
    <property type="project" value="UniProtKB"/>
</dbReference>
<dbReference type="GO" id="GO:0042407">
    <property type="term" value="P:cristae formation"/>
    <property type="evidence" value="ECO:0000315"/>
    <property type="project" value="UniProtKB"/>
</dbReference>
<dbReference type="GO" id="GO:0007007">
    <property type="term" value="P:inner mitochondrial membrane organization"/>
    <property type="evidence" value="ECO:0000315"/>
    <property type="project" value="UniProtKB"/>
</dbReference>
<dbReference type="GO" id="GO:0051560">
    <property type="term" value="P:mitochondrial calcium ion homeostasis"/>
    <property type="evidence" value="ECO:0000314"/>
    <property type="project" value="UniProtKB"/>
</dbReference>
<dbReference type="GO" id="GO:0006851">
    <property type="term" value="P:mitochondrial calcium ion transmembrane transport"/>
    <property type="evidence" value="ECO:0000314"/>
    <property type="project" value="UniProtKB"/>
</dbReference>
<dbReference type="GO" id="GO:0140141">
    <property type="term" value="P:mitochondrial potassium ion transmembrane transport"/>
    <property type="evidence" value="ECO:0000315"/>
    <property type="project" value="UniProtKB"/>
</dbReference>
<dbReference type="GO" id="GO:0007005">
    <property type="term" value="P:mitochondrion organization"/>
    <property type="evidence" value="ECO:0000318"/>
    <property type="project" value="GO_Central"/>
</dbReference>
<dbReference type="GO" id="GO:0051562">
    <property type="term" value="P:negative regulation of mitochondrial calcium ion concentration"/>
    <property type="evidence" value="ECO:0000315"/>
    <property type="project" value="UniProtKB"/>
</dbReference>
<dbReference type="GO" id="GO:0034214">
    <property type="term" value="P:protein hexamerization"/>
    <property type="evidence" value="ECO:0000250"/>
    <property type="project" value="UniProtKB"/>
</dbReference>
<dbReference type="GO" id="GO:0051260">
    <property type="term" value="P:protein homooligomerization"/>
    <property type="evidence" value="ECO:0000250"/>
    <property type="project" value="UniProtKB"/>
</dbReference>
<dbReference type="GO" id="GO:1900069">
    <property type="term" value="P:regulation of cellular hyperosmotic salinity response"/>
    <property type="evidence" value="ECO:0000315"/>
    <property type="project" value="UniProtKB"/>
</dbReference>
<dbReference type="FunFam" id="1.10.238.10:FF:000290">
    <property type="entry name" value="LETM1 and EF-hand domain-containing protein 1, mitochondrial"/>
    <property type="match status" value="1"/>
</dbReference>
<dbReference type="Gene3D" id="1.10.238.10">
    <property type="entry name" value="EF-hand"/>
    <property type="match status" value="1"/>
</dbReference>
<dbReference type="InterPro" id="IPR011992">
    <property type="entry name" value="EF-hand-dom_pair"/>
</dbReference>
<dbReference type="InterPro" id="IPR018247">
    <property type="entry name" value="EF_Hand_1_Ca_BS"/>
</dbReference>
<dbReference type="InterPro" id="IPR002048">
    <property type="entry name" value="EF_hand_dom"/>
</dbReference>
<dbReference type="InterPro" id="IPR033122">
    <property type="entry name" value="LETM1-like_RBD"/>
</dbReference>
<dbReference type="InterPro" id="IPR044202">
    <property type="entry name" value="LETM1/MDM38-like"/>
</dbReference>
<dbReference type="PANTHER" id="PTHR14009">
    <property type="entry name" value="LEUCINE ZIPPER-EF-HAND CONTAINING TRANSMEMBRANE PROTEIN"/>
    <property type="match status" value="1"/>
</dbReference>
<dbReference type="PANTHER" id="PTHR14009:SF8">
    <property type="entry name" value="MITOCHONDRIAL PROTON_CALCIUM EXCHANGER PROTEIN"/>
    <property type="match status" value="1"/>
</dbReference>
<dbReference type="Pfam" id="PF07766">
    <property type="entry name" value="LETM1_RBD"/>
    <property type="match status" value="1"/>
</dbReference>
<dbReference type="SUPFAM" id="SSF47473">
    <property type="entry name" value="EF-hand"/>
    <property type="match status" value="1"/>
</dbReference>
<dbReference type="PROSITE" id="PS00018">
    <property type="entry name" value="EF_HAND_1"/>
    <property type="match status" value="1"/>
</dbReference>
<dbReference type="PROSITE" id="PS50222">
    <property type="entry name" value="EF_HAND_2"/>
    <property type="match status" value="1"/>
</dbReference>
<dbReference type="PROSITE" id="PS51758">
    <property type="entry name" value="LETM1_RBD"/>
    <property type="match status" value="1"/>
</dbReference>
<comment type="function">
    <text evidence="8 9 10 11 12 13 14 15">Plays an important role in maintenance of mitochondrial morphology and in mediating either calcium or potassium/proton antiport (PubMed:18628306, PubMed:19797662, PubMed:24344246, PubMed:24898248, PubMed:29123128, PubMed:32139798, PubMed:36055214, PubMed:36321428). Mediates proton-dependent calcium efflux from mitochondrion (PubMed:19797662, PubMed:24344246, PubMed:29123128). Also functions as an electroneutral mitochondrial proton/potassium exchanger (PubMed:24898248, PubMed:36055214, PubMed:36321428). Crucial for the maintenance of mitochondrial tubular networks and for the assembly of the supercomplexes of the respiratory chain (PubMed:18628306, PubMed:36055214). Required for the maintenance of the tubular shape and cristae organization (PubMed:18628306, PubMed:32139798).</text>
</comment>
<comment type="catalytic activity">
    <reaction evidence="9 10 12">
        <text>Ca(2+)(in) + 2 H(+)(out) = Ca(2+)(out) + 2 H(+)(in)</text>
        <dbReference type="Rhea" id="RHEA:72199"/>
        <dbReference type="ChEBI" id="CHEBI:15378"/>
        <dbReference type="ChEBI" id="CHEBI:29108"/>
    </reaction>
</comment>
<comment type="catalytic activity">
    <reaction evidence="11 14 15">
        <text>K(+)(in) + H(+)(out) = K(+)(out) + H(+)(in)</text>
        <dbReference type="Rhea" id="RHEA:29467"/>
        <dbReference type="ChEBI" id="CHEBI:15378"/>
        <dbReference type="ChEBI" id="CHEBI:29103"/>
    </reaction>
</comment>
<comment type="activity regulation">
    <text evidence="9 10">Inhibited by ruthenium red or its derivative Ru360.</text>
</comment>
<comment type="biophysicochemical properties">
    <kinetics>
        <KM evidence="10">27 uM for calcium transport</KM>
        <Vmax evidence="10">21.0 pmol/sec/ug enzyme for calcium transport</Vmax>
    </kinetics>
</comment>
<comment type="subunit">
    <text evidence="1 8">Homohexamer (By similarity). Can form 2 complexes: a major (300 kDa) and a minor complex (500-600 kDa) (PubMed:18628306). Interacts with BCS1L (PubMed:18628306). Interacts with GHITM (PubMed:36321428).</text>
</comment>
<comment type="interaction">
    <interactant intactId="EBI-1052895">
        <id>O95202</id>
    </interactant>
    <interactant intactId="EBI-11962084">
        <id>Q3LI66</id>
        <label>KRTAP6-2</label>
    </interactant>
    <organismsDiffer>false</organismsDiffer>
    <experiments>3</experiments>
</comment>
<comment type="interaction">
    <interactant intactId="EBI-1052895">
        <id>O95202</id>
    </interactant>
    <interactant intactId="EBI-348380">
        <id>P25788</id>
        <label>PSMA3</label>
    </interactant>
    <organismsDiffer>false</organismsDiffer>
    <experiments>3</experiments>
</comment>
<comment type="interaction">
    <interactant intactId="EBI-1052895">
        <id>O95202</id>
    </interactant>
    <interactant intactId="EBI-7254550">
        <id>P36508</id>
        <label>ZNF76</label>
    </interactant>
    <organismsDiffer>false</organismsDiffer>
    <experiments>3</experiments>
</comment>
<comment type="subcellular location">
    <subcellularLocation>
        <location evidence="6 7 8 9 13">Mitochondrion inner membrane</location>
        <topology evidence="2">Single-pass membrane protein</topology>
    </subcellularLocation>
</comment>
<comment type="alternative products">
    <event type="alternative splicing"/>
    <isoform>
        <id>O95202-1</id>
        <name>1</name>
        <sequence type="displayed"/>
    </isoform>
    <isoform>
        <id>O95202-2</id>
        <name>2</name>
        <sequence type="described" ref="VSP_037814 VSP_037815 VSP_037816"/>
    </isoform>
    <isoform>
        <id>O95202-3</id>
        <name>3</name>
        <sequence type="described" ref="VSP_037815 VSP_037816"/>
    </isoform>
</comment>
<comment type="PTM">
    <text evidence="12">PINK1-mediated phosphorylation at Thr-192, positively regulates its mitochondrial calcium transport activity.</text>
</comment>
<comment type="disease" evidence="14">
    <disease id="DI-06533">
        <name>Neurodegeneration, childhood-onset, with multisystem involvement due to mitochondrial dysfunction</name>
        <acronym>CONDMIM</acronym>
        <description>An autosomal recessive disorder characterized primarily by global developmental delay and variably impaired intellectual development with speech delay apparent from infancy. Affected individuals have hypotonia, poor feeding, poor overall growth, and respiratory distress early in life. Other features include visual impairment due to optic atrophy, sensorineural hearing loss, and neuromuscular abnormalities. Features suggestive of a mitochondrial disorder include cataracts, cardiomyopathy, diabetes mellitus, combined oxidative phosphorylation deficiency, and increased lactate. Some patients develop seizures, some have dysmorphic facial features, and some have non-specific abnormalities on brain imaging. Death in childhood may occur.</description>
        <dbReference type="MIM" id="620089"/>
    </disease>
    <text>The disease is caused by variants affecting the gene represented in this entry.</text>
</comment>
<comment type="miscellaneous">
    <molecule>Isoform 2</molecule>
    <text evidence="19">May be due to intron retention.</text>
</comment>
<comment type="miscellaneous">
    <molecule>Isoform 3</molecule>
    <text evidence="19">May be due to intron retention.</text>
</comment>
<comment type="similarity">
    <text evidence="19">Belongs to the LETM1 family.</text>
</comment>
<comment type="caution">
    <text evidence="9 10 12 15">There are conflicting results concerning the role of LETM1 as a mitochondrial proton/calcium exchanger. According to (PubMed:19797662, PubMed:24344246, PubMed:29123128) LETM1 has been shown to function as a proton/calcium exchanger. However (PubMed:36321428) demonstrates the absence of this function in LETM1.</text>
</comment>
<comment type="sequence caution" evidence="19">
    <conflict type="erroneous translation">
        <sequence resource="EMBL-CDS" id="CAB63769"/>
    </conflict>
    <text>Incomplete prediction of CDS at the C-terminus.</text>
</comment>
<keyword id="KW-0002">3D-structure</keyword>
<keyword id="KW-0007">Acetylation</keyword>
<keyword id="KW-0025">Alternative splicing</keyword>
<keyword id="KW-0050">Antiport</keyword>
<keyword id="KW-0106">Calcium</keyword>
<keyword id="KW-0109">Calcium transport</keyword>
<keyword id="KW-0175">Coiled coil</keyword>
<keyword id="KW-0225">Disease variant</keyword>
<keyword id="KW-0406">Ion transport</keyword>
<keyword id="KW-0472">Membrane</keyword>
<keyword id="KW-0479">Metal-binding</keyword>
<keyword id="KW-0496">Mitochondrion</keyword>
<keyword id="KW-0999">Mitochondrion inner membrane</keyword>
<keyword id="KW-0523">Neurodegeneration</keyword>
<keyword id="KW-0597">Phosphoprotein</keyword>
<keyword id="KW-0630">Potassium</keyword>
<keyword id="KW-0633">Potassium transport</keyword>
<keyword id="KW-1267">Proteomics identification</keyword>
<keyword id="KW-1185">Reference proteome</keyword>
<keyword id="KW-0809">Transit peptide</keyword>
<keyword id="KW-0812">Transmembrane</keyword>
<keyword id="KW-1133">Transmembrane helix</keyword>
<keyword id="KW-0813">Transport</keyword>
<name>LETM1_HUMAN</name>
<protein>
    <recommendedName>
        <fullName evidence="19">Mitochondrial proton/calcium exchanger protein</fullName>
    </recommendedName>
    <alternativeName>
        <fullName evidence="18">Electroneutral mitochondrial K(+)/H(+)exchanger</fullName>
        <shortName evidence="18">KHE</shortName>
    </alternativeName>
    <alternativeName>
        <fullName>Leucine zipper-EF-hand-containing transmembrane protein 1</fullName>
    </alternativeName>
</protein>
<proteinExistence type="evidence at protein level"/>
<sequence>MASILLRSCRGRAPARLPPPPRYTVPRGSPGDPAHLSCASTLGLRNCLNVPFGCCTPIHPVYTSSRGDHLGCWALRPECLRIVSRAPWTSTSVGFVAVGPQCLPVRGWHSSRPVRDDSVVEKSLKSLKDKNKKLEEGGPVYSPPAEVVVKKSLGQRVLDELKHYYHGFRLLWIDTKIAARMLWRILNGHSLTRRERRQFLRICADLFRLVPFLVFVVVPFMEFLLPVAVKLFPNMLPSTFETQSLKEERLKKELRVKLELAKFLQDTIEEMALKNKAAKGSATKDFSVFFQKIRETGERPSNEEIMRFSKLFEDELTLDNLTRPQLVALCKLLELQSIGTNNFLRFQLTMRLRSIKADDKLIAEEGVDSLNVKELQAACRARGMRALGVTEDRLRGQLKQWLDLHLHQEIPTSLLILSRAMYLPDTLSPADQLKSTLQTLPEIVAKEAQVKVAEVEGEQVDNKAKLEATLQEEAAIQQEHREKELQKRSEVAKDFEPERVVAAPQRPGTEPQPEMPDTVLQSETLKDTAPVLEGLKEEEITKEEIDILSDACSKLQEQKKSLTKEKEELELLKEDVQDYSEDLQEIKKELSKTGEEKYVEESKASKRLTKRVQQMIGQIDGLISQLEMDQQAGKLAPANGMPTGENVISVAELINAMKQVKHIPESKLTSLAAALDENKDGKVNIDDLVKVIELVDKEDVHISTSQVAEIVATLEKEEKVEEKEKAKEKAEKEVAEVKS</sequence>
<reference key="1">
    <citation type="journal article" date="1999" name="Genomics">
        <title>LETM1, a novel gene encoding a putative EF-hand Ca(2+)-binding protein, flanks the Wolf-Hirschhorn syndrome (WHS) critical region and is deleted in most WHS patients.</title>
        <authorList>
            <person name="Endele S."/>
            <person name="Fuhry M."/>
            <person name="Pak S.-J."/>
            <person name="Zabel B.U."/>
            <person name="Winterpacht A."/>
        </authorList>
    </citation>
    <scope>NUCLEOTIDE SEQUENCE [MRNA] (ISOFORM 1)</scope>
</reference>
<reference key="2">
    <citation type="journal article" date="2004" name="Nat. Genet.">
        <title>Complete sequencing and characterization of 21,243 full-length human cDNAs.</title>
        <authorList>
            <person name="Ota T."/>
            <person name="Suzuki Y."/>
            <person name="Nishikawa T."/>
            <person name="Otsuki T."/>
            <person name="Sugiyama T."/>
            <person name="Irie R."/>
            <person name="Wakamatsu A."/>
            <person name="Hayashi K."/>
            <person name="Sato H."/>
            <person name="Nagai K."/>
            <person name="Kimura K."/>
            <person name="Makita H."/>
            <person name="Sekine M."/>
            <person name="Obayashi M."/>
            <person name="Nishi T."/>
            <person name="Shibahara T."/>
            <person name="Tanaka T."/>
            <person name="Ishii S."/>
            <person name="Yamamoto J."/>
            <person name="Saito K."/>
            <person name="Kawai Y."/>
            <person name="Isono Y."/>
            <person name="Nakamura Y."/>
            <person name="Nagahari K."/>
            <person name="Murakami K."/>
            <person name="Yasuda T."/>
            <person name="Iwayanagi T."/>
            <person name="Wagatsuma M."/>
            <person name="Shiratori A."/>
            <person name="Sudo H."/>
            <person name="Hosoiri T."/>
            <person name="Kaku Y."/>
            <person name="Kodaira H."/>
            <person name="Kondo H."/>
            <person name="Sugawara M."/>
            <person name="Takahashi M."/>
            <person name="Kanda K."/>
            <person name="Yokoi T."/>
            <person name="Furuya T."/>
            <person name="Kikkawa E."/>
            <person name="Omura Y."/>
            <person name="Abe K."/>
            <person name="Kamihara K."/>
            <person name="Katsuta N."/>
            <person name="Sato K."/>
            <person name="Tanikawa M."/>
            <person name="Yamazaki M."/>
            <person name="Ninomiya K."/>
            <person name="Ishibashi T."/>
            <person name="Yamashita H."/>
            <person name="Murakawa K."/>
            <person name="Fujimori K."/>
            <person name="Tanai H."/>
            <person name="Kimata M."/>
            <person name="Watanabe M."/>
            <person name="Hiraoka S."/>
            <person name="Chiba Y."/>
            <person name="Ishida S."/>
            <person name="Ono Y."/>
            <person name="Takiguchi S."/>
            <person name="Watanabe S."/>
            <person name="Yosida M."/>
            <person name="Hotuta T."/>
            <person name="Kusano J."/>
            <person name="Kanehori K."/>
            <person name="Takahashi-Fujii A."/>
            <person name="Hara H."/>
            <person name="Tanase T.-O."/>
            <person name="Nomura Y."/>
            <person name="Togiya S."/>
            <person name="Komai F."/>
            <person name="Hara R."/>
            <person name="Takeuchi K."/>
            <person name="Arita M."/>
            <person name="Imose N."/>
            <person name="Musashino K."/>
            <person name="Yuuki H."/>
            <person name="Oshima A."/>
            <person name="Sasaki N."/>
            <person name="Aotsuka S."/>
            <person name="Yoshikawa Y."/>
            <person name="Matsunawa H."/>
            <person name="Ichihara T."/>
            <person name="Shiohata N."/>
            <person name="Sano S."/>
            <person name="Moriya S."/>
            <person name="Momiyama H."/>
            <person name="Satoh N."/>
            <person name="Takami S."/>
            <person name="Terashima Y."/>
            <person name="Suzuki O."/>
            <person name="Nakagawa S."/>
            <person name="Senoh A."/>
            <person name="Mizoguchi H."/>
            <person name="Goto Y."/>
            <person name="Shimizu F."/>
            <person name="Wakebe H."/>
            <person name="Hishigaki H."/>
            <person name="Watanabe T."/>
            <person name="Sugiyama A."/>
            <person name="Takemoto M."/>
            <person name="Kawakami B."/>
            <person name="Yamazaki M."/>
            <person name="Watanabe K."/>
            <person name="Kumagai A."/>
            <person name="Itakura S."/>
            <person name="Fukuzumi Y."/>
            <person name="Fujimori Y."/>
            <person name="Komiyama M."/>
            <person name="Tashiro H."/>
            <person name="Tanigami A."/>
            <person name="Fujiwara T."/>
            <person name="Ono T."/>
            <person name="Yamada K."/>
            <person name="Fujii Y."/>
            <person name="Ozaki K."/>
            <person name="Hirao M."/>
            <person name="Ohmori Y."/>
            <person name="Kawabata A."/>
            <person name="Hikiji T."/>
            <person name="Kobatake N."/>
            <person name="Inagaki H."/>
            <person name="Ikema Y."/>
            <person name="Okamoto S."/>
            <person name="Okitani R."/>
            <person name="Kawakami T."/>
            <person name="Noguchi S."/>
            <person name="Itoh T."/>
            <person name="Shigeta K."/>
            <person name="Senba T."/>
            <person name="Matsumura K."/>
            <person name="Nakajima Y."/>
            <person name="Mizuno T."/>
            <person name="Morinaga M."/>
            <person name="Sasaki M."/>
            <person name="Togashi T."/>
            <person name="Oyama M."/>
            <person name="Hata H."/>
            <person name="Watanabe M."/>
            <person name="Komatsu T."/>
            <person name="Mizushima-Sugano J."/>
            <person name="Satoh T."/>
            <person name="Shirai Y."/>
            <person name="Takahashi Y."/>
            <person name="Nakagawa K."/>
            <person name="Okumura K."/>
            <person name="Nagase T."/>
            <person name="Nomura N."/>
            <person name="Kikuchi H."/>
            <person name="Masuho Y."/>
            <person name="Yamashita R."/>
            <person name="Nakai K."/>
            <person name="Yada T."/>
            <person name="Nakamura Y."/>
            <person name="Ohara O."/>
            <person name="Isogai T."/>
            <person name="Sugano S."/>
        </authorList>
    </citation>
    <scope>NUCLEOTIDE SEQUENCE [LARGE SCALE MRNA] (ISOFORMS 2 AND 3)</scope>
    <source>
        <tissue>Cerebellum</tissue>
        <tissue>Thymus</tissue>
    </source>
</reference>
<reference key="3">
    <citation type="journal article" date="2007" name="BMC Genomics">
        <title>The full-ORF clone resource of the German cDNA consortium.</title>
        <authorList>
            <person name="Bechtel S."/>
            <person name="Rosenfelder H."/>
            <person name="Duda A."/>
            <person name="Schmidt C.P."/>
            <person name="Ernst U."/>
            <person name="Wellenreuther R."/>
            <person name="Mehrle A."/>
            <person name="Schuster C."/>
            <person name="Bahr A."/>
            <person name="Bloecker H."/>
            <person name="Heubner D."/>
            <person name="Hoerlein A."/>
            <person name="Michel G."/>
            <person name="Wedler H."/>
            <person name="Koehrer K."/>
            <person name="Ottenwaelder B."/>
            <person name="Poustka A."/>
            <person name="Wiemann S."/>
            <person name="Schupp I."/>
        </authorList>
    </citation>
    <scope>NUCLEOTIDE SEQUENCE [LARGE SCALE MRNA] (ISOFORM 2)</scope>
    <source>
        <tissue>Testis</tissue>
    </source>
</reference>
<reference key="4">
    <citation type="journal article" date="2004" name="Genome Res.">
        <title>The status, quality, and expansion of the NIH full-length cDNA project: the Mammalian Gene Collection (MGC).</title>
        <authorList>
            <consortium name="The MGC Project Team"/>
        </authorList>
    </citation>
    <scope>NUCLEOTIDE SEQUENCE [LARGE SCALE MRNA] (ISOFORM 1)</scope>
    <source>
        <tissue>Brain</tissue>
        <tissue>Skin</tissue>
    </source>
</reference>
<reference key="5">
    <citation type="journal article" date="2004" name="Genomics">
        <title>LETM1, a gene deleted in Wolf-Hirschhorn syndrome, encodes an evolutionarily conserved mitochondrial protein.</title>
        <authorList>
            <person name="Schlickum S."/>
            <person name="Moghekar A."/>
            <person name="Simpson J.C."/>
            <person name="Steglich C."/>
            <person name="O'Brien R.J."/>
            <person name="Winterpacht A."/>
            <person name="Endele S.U."/>
        </authorList>
    </citation>
    <scope>SUBCELLULAR LOCATION</scope>
</reference>
<reference key="6">
    <citation type="journal article" date="2004" name="J. Biol. Chem.">
        <title>The LETM1/YOL027 gene family encodes a factor of the mitochondrial K+ homeostasis with a potential role in the Wolf-Hirschhorn syndrome.</title>
        <authorList>
            <person name="Nowikovsky K."/>
            <person name="Froschauer E.M."/>
            <person name="Zsurka G."/>
            <person name="Samaj J."/>
            <person name="Reipert S."/>
            <person name="Kolisek M."/>
            <person name="Wiesenberger G."/>
            <person name="Schweyen R.J."/>
        </authorList>
    </citation>
    <scope>SUBCELLULAR LOCATION</scope>
</reference>
<reference key="7">
    <citation type="journal article" date="2008" name="J. Cell Sci.">
        <title>Characterization of the mitochondrial protein LETM1, which maintains the mitochondrial tubular shapes and interacts with the AAA-ATPase BCS1L.</title>
        <authorList>
            <person name="Tamai S."/>
            <person name="Iida H."/>
            <person name="Yokota S."/>
            <person name="Sayano T."/>
            <person name="Kiguchiya S."/>
            <person name="Ishihara N."/>
            <person name="Hayashi J."/>
            <person name="Mihara K."/>
            <person name="Oka T."/>
        </authorList>
    </citation>
    <scope>FUNCTION</scope>
    <scope>SUBUNIT</scope>
    <scope>SUBCELLULAR LOCATION</scope>
    <scope>INTERACTION WITH BCS1L</scope>
</reference>
<reference key="8">
    <citation type="journal article" date="2009" name="Science">
        <title>Lysine acetylation targets protein complexes and co-regulates major cellular functions.</title>
        <authorList>
            <person name="Choudhary C."/>
            <person name="Kumar C."/>
            <person name="Gnad F."/>
            <person name="Nielsen M.L."/>
            <person name="Rehman M."/>
            <person name="Walther T.C."/>
            <person name="Olsen J.V."/>
            <person name="Mann M."/>
        </authorList>
    </citation>
    <scope>ACETYLATION [LARGE SCALE ANALYSIS] AT LYS-597</scope>
    <scope>IDENTIFICATION BY MASS SPECTROMETRY [LARGE SCALE ANALYSIS]</scope>
</reference>
<reference key="9">
    <citation type="journal article" date="2009" name="Science">
        <title>Genome-wide RNAi screen identifies Letm1 as a mitochondrial Ca2+/H+ antiporter.</title>
        <authorList>
            <person name="Jiang D."/>
            <person name="Zhao L."/>
            <person name="Clapham D.E."/>
        </authorList>
    </citation>
    <scope>FUNCTION</scope>
    <scope>ACTIVITY REGULATION</scope>
    <scope>SUBCELLULAR LOCATION</scope>
    <scope>TRANSPORTER ACTIVITY</scope>
</reference>
<reference key="10">
    <citation type="journal article" date="2011" name="BMC Syst. Biol.">
        <title>Initial characterization of the human central proteome.</title>
        <authorList>
            <person name="Burkard T.R."/>
            <person name="Planyavsky M."/>
            <person name="Kaupe I."/>
            <person name="Breitwieser F.P."/>
            <person name="Buerckstuemmer T."/>
            <person name="Bennett K.L."/>
            <person name="Superti-Furga G."/>
            <person name="Colinge J."/>
        </authorList>
    </citation>
    <scope>IDENTIFICATION BY MASS SPECTROMETRY [LARGE SCALE ANALYSIS]</scope>
</reference>
<reference key="11">
    <citation type="journal article" date="2014" name="J. Biol. Chem.">
        <title>NCLX protein, but not LETM1, mediates mitochondrial Ca2+ extrusion, thereby limiting Ca2+-induced NAD(P)H production and modulating matrix redox state.</title>
        <authorList>
            <person name="De Marchi U."/>
            <person name="Santo-Domingo J."/>
            <person name="Castelbou C."/>
            <person name="Sekler I."/>
            <person name="Wiederkehr A."/>
            <person name="Demaurex N."/>
        </authorList>
    </citation>
    <scope>FUNCTION</scope>
    <scope>TRANSPORTER ACTIVITY</scope>
</reference>
<reference key="12">
    <citation type="journal article" date="2014" name="J. Gen. Physiol.">
        <title>Functional reconstitution of the mitochondrial Ca2+/H+ antiporter Letm1.</title>
        <authorList>
            <person name="Tsai M.F."/>
            <person name="Jiang D."/>
            <person name="Zhao L."/>
            <person name="Clapham D."/>
            <person name="Miller C."/>
        </authorList>
    </citation>
    <scope>FUNCTION</scope>
    <scope>TRANSPORTER ACTIVITY</scope>
    <scope>BIOPHYSICOCHEMICAL PROPERTIES</scope>
    <scope>ACTIVITY REGULATION</scope>
</reference>
<reference key="13">
    <citation type="journal article" date="2014" name="J. Proteomics">
        <title>An enzyme assisted RP-RPLC approach for in-depth analysis of human liver phosphoproteome.</title>
        <authorList>
            <person name="Bian Y."/>
            <person name="Song C."/>
            <person name="Cheng K."/>
            <person name="Dong M."/>
            <person name="Wang F."/>
            <person name="Huang J."/>
            <person name="Sun D."/>
            <person name="Wang L."/>
            <person name="Ye M."/>
            <person name="Zou H."/>
        </authorList>
    </citation>
    <scope>IDENTIFICATION BY MASS SPECTROMETRY [LARGE SCALE ANALYSIS]</scope>
    <source>
        <tissue>Liver</tissue>
    </source>
</reference>
<reference key="14">
    <citation type="journal article" date="2015" name="Proteomics">
        <title>N-terminome analysis of the human mitochondrial proteome.</title>
        <authorList>
            <person name="Vaca Jacome A.S."/>
            <person name="Rabilloud T."/>
            <person name="Schaeffer-Reiss C."/>
            <person name="Rompais M."/>
            <person name="Ayoub D."/>
            <person name="Lane L."/>
            <person name="Bairoch A."/>
            <person name="Van Dorsselaer A."/>
            <person name="Carapito C."/>
        </authorList>
    </citation>
    <scope>IDENTIFICATION BY MASS SPECTROMETRY [LARGE SCALE ANALYSIS]</scope>
</reference>
<reference key="15">
    <citation type="journal article" date="2017" name="Nat. Commun.">
        <title>PINK1-mediated phosphorylation of LETM1 regulates mitochondrial calcium transport and protects neurons against mitochondrial stress.</title>
        <authorList>
            <person name="Huang E."/>
            <person name="Qu D."/>
            <person name="Huang T."/>
            <person name="Rizzi N."/>
            <person name="Boonying W."/>
            <person name="Krolak D."/>
            <person name="Ciana P."/>
            <person name="Woulfe J."/>
            <person name="Klein C."/>
            <person name="Slack R.S."/>
            <person name="Figeys D."/>
            <person name="Park D.S."/>
        </authorList>
    </citation>
    <scope>FUNCTION</scope>
    <scope>TRANSPORTER ACTIVITY</scope>
    <scope>PHOSPHORYLATION AT THR-192</scope>
    <scope>MUTAGENESIS OF THR-192</scope>
</reference>
<reference key="16">
    <citation type="journal article" date="2020" name="Commun. Biol.">
        <title>The mitochondrial inner membrane protein LETM1 modulates cristae organization through its LETM domain.</title>
        <authorList>
            <person name="Nakamura S."/>
            <person name="Matsui A."/>
            <person name="Akabane S."/>
            <person name="Tamura Y."/>
            <person name="Hatano A."/>
            <person name="Miyano Y."/>
            <person name="Omote H."/>
            <person name="Kajikawa M."/>
            <person name="Maenaka K."/>
            <person name="Moriyama Y."/>
            <person name="Endo T."/>
            <person name="Oka T."/>
        </authorList>
    </citation>
    <scope>FUNCTION</scope>
    <scope>SUBCELLULAR LOCATION</scope>
    <scope>TOPOLOGY</scope>
    <scope>MUTAGENESIS OF ASP-359; ARG-382; GLY-383 AND MET-384</scope>
</reference>
<reference key="17">
    <citation type="journal article" date="2022" name="EMBO Rep.">
        <title>TMBIM5 is the Ca2+ /H+ antiporter of mammalian mitochondria.</title>
        <authorList>
            <person name="Austin S."/>
            <person name="Mekis R."/>
            <person name="Mohammed S.E.M."/>
            <person name="Scalise M."/>
            <person name="Wang W.A."/>
            <person name="Galluccio M."/>
            <person name="Pfeiffer C."/>
            <person name="Borovec T."/>
            <person name="Parapatics K."/>
            <person name="Vitko D."/>
            <person name="Dinhopl N."/>
            <person name="Demaurex N."/>
            <person name="Bennett K.L."/>
            <person name="Indiveri C."/>
            <person name="Nowikovsky K."/>
        </authorList>
    </citation>
    <scope>FUNCTION</scope>
    <scope>TRANSPORTER ACTIVITY</scope>
    <scope>INTERACTION WITH GHITM</scope>
</reference>
<reference key="18">
    <citation type="journal article" date="2022" name="Am. J. Hum. Genet.">
        <title>Bi-allelic LETM1 variants perturb mitochondrial ion homeostasis leading to a clinical spectrum with predominant nervous system involvement.</title>
        <authorList>
            <person name="Kaiyrzhanov R."/>
            <person name="Mohammed S.E.M."/>
            <person name="Maroofian R."/>
            <person name="Husain R.A."/>
            <person name="Catania A."/>
            <person name="Torraco A."/>
            <person name="Alahmad A."/>
            <person name="Dutra-Clarke M."/>
            <person name="Groenborg S."/>
            <person name="Sudarsanam A."/>
            <person name="Vogt J."/>
            <person name="Arrigoni F."/>
            <person name="Baptista J."/>
            <person name="Haider S."/>
            <person name="Feichtinger R.G."/>
            <person name="Bernardi P."/>
            <person name="Zulian A."/>
            <person name="Gusic M."/>
            <person name="Efthymiou S."/>
            <person name="Bai R."/>
            <person name="Bibi F."/>
            <person name="Horga A."/>
            <person name="Martinez-Agosto J.A."/>
            <person name="Lam A."/>
            <person name="Manole A."/>
            <person name="Rodriguez D.P."/>
            <person name="Durigon R."/>
            <person name="Pyle A."/>
            <person name="Albash B."/>
            <person name="Dionisi-Vici C."/>
            <person name="Murphy D."/>
            <person name="Martinelli D."/>
            <person name="Bugiardini E."/>
            <person name="Allis K."/>
            <person name="Lamperti C."/>
            <person name="Reipert S."/>
            <person name="Risom L."/>
            <person name="Laugwitz L."/>
            <person name="Di Nottia M."/>
            <person name="McFarland R."/>
            <person name="Vilarinho L."/>
            <person name="Hanna M."/>
            <person name="Prokisch H."/>
            <person name="Mayr J.A."/>
            <person name="Bertini E.S."/>
            <person name="Ghezzi D."/>
            <person name="Oestergaard E."/>
            <person name="Wortmann S.B."/>
            <person name="Carrozzo R."/>
            <person name="Haack T.B."/>
            <person name="Taylor R.W."/>
            <person name="Spinazzola A."/>
            <person name="Nowikovsky K."/>
            <person name="Houlden H."/>
        </authorList>
    </citation>
    <scope>VARIANTS CONDMIM LYS-252 DEL; ASN-293; GLN-294; SER-300; ASN-358; PRO-380; HIS-393 AND ARG-587</scope>
    <scope>CHARACTERIZATION OF VARIANTS CONDMIM LYS-252 DEL; ASN-293; GLN-294; SER-300; ASN-358; PRO-380 AND ARG-587</scope>
    <scope>VARIANT LEU-305</scope>
    <scope>CHARACTERIZATION OF VARIANT LEU-305</scope>
    <scope>INVOLVEMENT IN CONDMIM</scope>
    <scope>FUNCTION</scope>
    <scope>TRANSPORTER ACTIVITY</scope>
</reference>
<feature type="transit peptide" description="Mitochondrion" evidence="2">
    <location>
        <begin position="1"/>
        <end position="115"/>
    </location>
</feature>
<feature type="chain" id="PRO_0000017694" description="Mitochondrial proton/calcium exchanger protein">
    <location>
        <begin position="116"/>
        <end position="739"/>
    </location>
</feature>
<feature type="topological domain" description="Mitochondrial intermembrane" evidence="20">
    <location>
        <begin position="116"/>
        <end position="208"/>
    </location>
</feature>
<feature type="transmembrane region" description="Helical" evidence="2">
    <location>
        <begin position="209"/>
        <end position="229"/>
    </location>
</feature>
<feature type="topological domain" description="Mitochondrial matrix" evidence="20">
    <location>
        <begin position="230"/>
        <end position="739"/>
    </location>
</feature>
<feature type="domain" description="Letm1 RBD" evidence="4">
    <location>
        <begin position="252"/>
        <end position="537"/>
    </location>
</feature>
<feature type="domain" description="EF-hand" evidence="3">
    <location>
        <begin position="663"/>
        <end position="698"/>
    </location>
</feature>
<feature type="region of interest" description="Disordered" evidence="5">
    <location>
        <begin position="718"/>
        <end position="739"/>
    </location>
</feature>
<feature type="coiled-coil region" evidence="2">
    <location>
        <begin position="115"/>
        <end position="136"/>
    </location>
</feature>
<feature type="coiled-coil region" evidence="2">
    <location>
        <begin position="462"/>
        <end position="490"/>
    </location>
</feature>
<feature type="coiled-coil region" evidence="2">
    <location>
        <begin position="537"/>
        <end position="627"/>
    </location>
</feature>
<feature type="coiled-coil region" evidence="2">
    <location>
        <begin position="708"/>
        <end position="739"/>
    </location>
</feature>
<feature type="binding site" evidence="3">
    <location>
        <position position="676"/>
    </location>
    <ligand>
        <name>Ca(2+)</name>
        <dbReference type="ChEBI" id="CHEBI:29108"/>
    </ligand>
</feature>
<feature type="binding site" evidence="3">
    <location>
        <position position="678"/>
    </location>
    <ligand>
        <name>Ca(2+)</name>
        <dbReference type="ChEBI" id="CHEBI:29108"/>
    </ligand>
</feature>
<feature type="binding site" evidence="3">
    <location>
        <position position="680"/>
    </location>
    <ligand>
        <name>Ca(2+)</name>
        <dbReference type="ChEBI" id="CHEBI:29108"/>
    </ligand>
</feature>
<feature type="binding site" evidence="3">
    <location>
        <position position="682"/>
    </location>
    <ligand>
        <name>Ca(2+)</name>
        <dbReference type="ChEBI" id="CHEBI:29108"/>
    </ligand>
</feature>
<feature type="binding site" evidence="3">
    <location>
        <position position="687"/>
    </location>
    <ligand>
        <name>Ca(2+)</name>
        <dbReference type="ChEBI" id="CHEBI:29108"/>
    </ligand>
</feature>
<feature type="modified residue" description="Phosphothreonine; by PINK1" evidence="12">
    <location>
        <position position="192"/>
    </location>
</feature>
<feature type="modified residue" description="N6-acetyllysine" evidence="22">
    <location>
        <position position="597"/>
    </location>
</feature>
<feature type="splice variant" id="VSP_037814" description="In isoform 2." evidence="16 17">
    <original>MASILLRSCRGRAPARLPPPPRYTVPRGSPGDPAHLSCASTLGLRNCL</original>
    <variation>MRHTWPFR</variation>
    <location>
        <begin position="1"/>
        <end position="48"/>
    </location>
</feature>
<feature type="splice variant" id="VSP_037815" description="In isoform 2 and isoform 3." evidence="16 17">
    <original>KIR</original>
    <variation>QVL</variation>
    <location>
        <begin position="292"/>
        <end position="294"/>
    </location>
</feature>
<feature type="splice variant" id="VSP_037816" description="In isoform 2 and isoform 3." evidence="16 17">
    <location>
        <begin position="295"/>
        <end position="739"/>
    </location>
</feature>
<feature type="sequence variant" id="VAR_087731" description="In CONDMIM; decreased function in mitochondrial potassium ion transmembrane transport; does not fully rescue defective proton/potassium exchange in letm1-deficient yeast; dbSNP:rs2108847729." evidence="14">
    <location>
        <position position="252"/>
    </location>
</feature>
<feature type="sequence variant" id="VAR_087732" description="In CONDMIM; decreased function in mitochondrial potassium ion transmembrane transport; does not fully rescue defective proton/potassium exchange in letm1-deficient yeast; dbSNP:rs2108846420." evidence="14">
    <original>I</original>
    <variation>N</variation>
    <location>
        <position position="293"/>
    </location>
</feature>
<feature type="sequence variant" id="VAR_087733" description="In CONDMIM; decreased function in mitochondrial potassium ion transmembrane transport; does not fully rescue defective proton/potassium exchange in letm1-deficient yeast; dbSNP:rs750286012." evidence="14">
    <original>R</original>
    <variation>Q</variation>
    <location>
        <position position="294"/>
    </location>
</feature>
<feature type="sequence variant" id="VAR_087734" description="In CONDMIM; homozygous patient cells show altered levels of components of the oxidative phosphorylation machinery; decreased function in mitochondrial potassium ion transmembrane transport; does not fully rescue defective proton/potassium exchange in letm1-deficient yeast; dbSNP:rs2108846393." evidence="14">
    <original>P</original>
    <variation>S</variation>
    <location>
        <position position="300"/>
    </location>
</feature>
<feature type="sequence variant" id="VAR_087735" description="No effect on mitochondrial potassium ion transmembrane transport; it fully rescues defective proton/potassium exchange in letm1-deficient yeast; dbSNP:rs775882709." evidence="14">
    <original>I</original>
    <variation>L</variation>
    <location>
        <position position="305"/>
    </location>
</feature>
<feature type="sequence variant" id="VAR_087736" description="In CONDMIM; homozygous patient cells show abnormal mitochondrial morphology and altered levels of components of the oxidative phosphorylation machinery; loss of function in mitochondrial potassium ion transmembrane transport; does not rescue defective proton/potassium exchange in letm1-deficient yeast; dbSNP:rs2108846252." evidence="14">
    <original>D</original>
    <variation>N</variation>
    <location>
        <position position="358"/>
    </location>
</feature>
<feature type="sequence variant" id="VAR_087737" description="In CONDMIM; uncertain significance; decreased function in mitochondrial potassium ion transmembrane transport; does not fully rescue defective proton/potassium exchange in letm1-deficient yeast; dbSNP:rs2108840447." evidence="14">
    <original>R</original>
    <variation>P</variation>
    <location>
        <position position="380"/>
    </location>
</feature>
<feature type="sequence variant" id="VAR_087738" description="In CONDMIM; uncertain significance; dbSNP:rs201808137." evidence="14">
    <original>R</original>
    <variation>H</variation>
    <location>
        <position position="393"/>
    </location>
</feature>
<feature type="sequence variant" id="VAR_087739" description="In CONDMIM; benign; no effect on mitochondrial potassium ion transmembrane transport; it fully rescues defective proton/potassium exchange in letm1-deficient yeast; dbSNP:rs115233072." evidence="14">
    <original>K</original>
    <variation>R</variation>
    <location>
        <position position="587"/>
    </location>
</feature>
<feature type="mutagenesis site" description="Loss of phosphorylation by PINK1." evidence="12">
    <original>T</original>
    <variation>A</variation>
    <location>
        <position position="192"/>
    </location>
</feature>
<feature type="mutagenesis site" description="Phosphomimetic mutant. Increased rate of calcium export from mitochondria." evidence="12">
    <original>T</original>
    <variation>E</variation>
    <location>
        <position position="192"/>
    </location>
</feature>
<feature type="mutagenesis site" description="Loss of ability to complement morphologic defects of mitochondria in letm1-deficient yeast mutant. Slightly supports growth of letm1-deficient yeast mutant on minimal essential medium." evidence="13">
    <original>D</original>
    <variation>A</variation>
    <location>
        <position position="359"/>
    </location>
</feature>
<feature type="mutagenesis site" description="Loss of ability to complement growth defects and morphologic defects of mitochondria in letm1-deficient yeast mutant; when associated with A-383 and A-384." evidence="13">
    <original>R</original>
    <variation>A</variation>
    <location>
        <position position="382"/>
    </location>
</feature>
<feature type="mutagenesis site" description="Loss of ability to complement growth defects and morphologic defects of mitochondria in letm1-deficient yeast mutant; when associated with A-382 and A-384." evidence="13">
    <original>G</original>
    <variation>A</variation>
    <location>
        <position position="383"/>
    </location>
</feature>
<feature type="mutagenesis site" description="Loss of ability to complement growth defects and morphologic defects of mitochondria in letm1-deficient yeast mutant; when associated with A-382 and A-383." evidence="13">
    <original>M</original>
    <variation>A</variation>
    <location>
        <position position="384"/>
    </location>
</feature>
<feature type="strand" evidence="23">
    <location>
        <begin position="647"/>
        <end position="649"/>
    </location>
</feature>
<feature type="helix" evidence="23">
    <location>
        <begin position="650"/>
        <end position="660"/>
    </location>
</feature>
<feature type="helix" evidence="23">
    <location>
        <begin position="665"/>
        <end position="675"/>
    </location>
</feature>
<feature type="strand" evidence="23">
    <location>
        <begin position="680"/>
        <end position="684"/>
    </location>
</feature>
<feature type="helix" evidence="23">
    <location>
        <begin position="685"/>
        <end position="696"/>
    </location>
</feature>